<sequence length="293" mass="31231">MADDAGAAGGPGGPGGPGLGGRGGFRGGFGSGLRGRGRGRGRGRGRGRGARGGKAEDKEWIPVTKLGRLVKDMKIKSLEEIYLFSLPIKESEIIDFFLGASLKDEVLKIMPVQKQTRAGQRTRFKAFVAIGDYNGHVGLGVKCSKEVATAIRGAIILAKLSIVPVRRGYWGNKIGKPHTVPCKVTGRCGSVLVRLIPAPRGTGIVSAPVPKKLLMMAGIDDCYTSARGCTATLGNFAKATFDAISKTYSYLTPDLWKETVFTKSPYQEFTDHLVKTHTRVSVQRTQAPAVATT</sequence>
<reference key="1">
    <citation type="journal article" date="1991" name="J. Biol. Chem.">
        <title>Primary structure of rat ribosomal protein S2. A ribosomal protein with arginine-glycine tandem repeats and RGGF motifs that are associated with nucleolar localization and binding to ribonucleic acids.</title>
        <authorList>
            <person name="Suzuki K."/>
            <person name="Olvera J."/>
            <person name="Wool I.G."/>
        </authorList>
    </citation>
    <scope>NUCLEOTIDE SEQUENCE [MRNA]</scope>
    <scope>PROTEIN SEQUENCE OF 111-128</scope>
    <source>
        <strain>Sprague-Dawley</strain>
        <tissue>Liver</tissue>
    </source>
</reference>
<reference key="2">
    <citation type="journal article" date="2004" name="Genome Res.">
        <title>The status, quality, and expansion of the NIH full-length cDNA project: the Mammalian Gene Collection (MGC).</title>
        <authorList>
            <consortium name="The MGC Project Team"/>
        </authorList>
    </citation>
    <scope>NUCLEOTIDE SEQUENCE [LARGE SCALE MRNA]</scope>
    <source>
        <tissue>Spleen</tissue>
    </source>
</reference>
<accession>P27952</accession>
<accession>Q4G062</accession>
<protein>
    <recommendedName>
        <fullName evidence="5">Small ribosomal subunit protein uS5</fullName>
    </recommendedName>
    <alternativeName>
        <fullName>40S ribosomal protein S2</fullName>
    </alternativeName>
</protein>
<organism>
    <name type="scientific">Rattus norvegicus</name>
    <name type="common">Rat</name>
    <dbReference type="NCBI Taxonomy" id="10116"/>
    <lineage>
        <taxon>Eukaryota</taxon>
        <taxon>Metazoa</taxon>
        <taxon>Chordata</taxon>
        <taxon>Craniata</taxon>
        <taxon>Vertebrata</taxon>
        <taxon>Euteleostomi</taxon>
        <taxon>Mammalia</taxon>
        <taxon>Eutheria</taxon>
        <taxon>Euarchontoglires</taxon>
        <taxon>Glires</taxon>
        <taxon>Rodentia</taxon>
        <taxon>Myomorpha</taxon>
        <taxon>Muroidea</taxon>
        <taxon>Muridae</taxon>
        <taxon>Murinae</taxon>
        <taxon>Rattus</taxon>
    </lineage>
</organism>
<comment type="function">
    <text evidence="1 2">Component of the ribosome, a large ribonucleoprotein complex responsible for the synthesis of proteins in the cell. The small ribosomal subunit (SSU) binds messenger RNAs (mRNAs) and translates the encoded message by selecting cognate aminoacyl-transfer RNA (tRNA) molecules. The large subunit (LSU) contains the ribosomal catalytic site termed the peptidyl transferase center (PTC), which catalyzes the formation of peptide bonds, thereby polymerizing the amino acids delivered by tRNAs into a polypeptide chain. The nascent polypeptides leave the ribosome through a tunnel in the LSU and interact with protein factors that function in enzymatic processing, targeting, and the membrane insertion of nascent chains at the exit of the ribosomal tunnel (By similarity). Plays a role in the assembly and function of the 40S ribosomal subunit. Mutations in this protein affects the control of translational fidelity. Involved in nucleolar processing of pre-18S ribosomal RNA and ribosome assembly (By similarity).</text>
</comment>
<comment type="subunit">
    <text evidence="1">Component of the small ribosomal subunit. Interacts with zinc finger protein ZNF277 (via zinc-finger domains); the interaction is direct; the interaction is extra-ribosomal. Interaction with ZNF277 competes with the binding of RPS2 to protein arginine methyltransferase PRMT3.</text>
</comment>
<comment type="subcellular location">
    <subcellularLocation>
        <location evidence="1">Cytoplasm</location>
    </subcellularLocation>
    <subcellularLocation>
        <location evidence="1">Nucleus</location>
        <location evidence="1">Nucleolus</location>
    </subcellularLocation>
    <text evidence="1">Probably localized to nucleolus and cytoplasm in complex with ZNF277.</text>
</comment>
<comment type="PTM">
    <text evidence="1">Citrullinated by PADI4 in the Arg/Gly-rich region.</text>
</comment>
<comment type="PTM">
    <text evidence="1">Asymmetric arginine dimethylation by PRMT3 occurs at multiple sites in the Arg/Gly-rich region.</text>
</comment>
<comment type="PTM">
    <text evidence="1">Monoubiquitinated at Lys-54 and Lys-58 by RNF10 when a ribosome has stalled during translation, leading to its degradation by the proteasome. Deubiquitinated at Lys-54 and Lys-58 by USP10, preventing degradation by the proteasome and promoting 40S ribosome subunit recycling following ribosome dissociation.</text>
</comment>
<comment type="similarity">
    <text evidence="5">Belongs to the universal ribosomal protein uS5 family.</text>
</comment>
<keyword id="KW-0002">3D-structure</keyword>
<keyword id="KW-0007">Acetylation</keyword>
<keyword id="KW-0164">Citrullination</keyword>
<keyword id="KW-0963">Cytoplasm</keyword>
<keyword id="KW-0903">Direct protein sequencing</keyword>
<keyword id="KW-1017">Isopeptide bond</keyword>
<keyword id="KW-0539">Nucleus</keyword>
<keyword id="KW-0597">Phosphoprotein</keyword>
<keyword id="KW-1185">Reference proteome</keyword>
<keyword id="KW-0677">Repeat</keyword>
<keyword id="KW-0687">Ribonucleoprotein</keyword>
<keyword id="KW-0689">Ribosomal protein</keyword>
<keyword id="KW-0832">Ubl conjugation</keyword>
<gene>
    <name type="primary">Rps2</name>
</gene>
<name>RS2_RAT</name>
<evidence type="ECO:0000250" key="1">
    <source>
        <dbReference type="UniProtKB" id="P15880"/>
    </source>
</evidence>
<evidence type="ECO:0000250" key="2">
    <source>
        <dbReference type="UniProtKB" id="P25443"/>
    </source>
</evidence>
<evidence type="ECO:0000255" key="3">
    <source>
        <dbReference type="PROSITE-ProRule" id="PRU00268"/>
    </source>
</evidence>
<evidence type="ECO:0000256" key="4">
    <source>
        <dbReference type="SAM" id="MobiDB-lite"/>
    </source>
</evidence>
<evidence type="ECO:0000305" key="5"/>
<dbReference type="EMBL" id="X57432">
    <property type="protein sequence ID" value="CAA40679.1"/>
    <property type="molecule type" value="mRNA"/>
</dbReference>
<dbReference type="EMBL" id="BC098726">
    <property type="protein sequence ID" value="AAH98726.1"/>
    <property type="molecule type" value="mRNA"/>
</dbReference>
<dbReference type="PIR" id="S18828">
    <property type="entry name" value="R3RTS2"/>
</dbReference>
<dbReference type="RefSeq" id="NP_114026.3">
    <property type="nucleotide sequence ID" value="NM_031838.3"/>
</dbReference>
<dbReference type="RefSeq" id="XP_063126045.1">
    <property type="nucleotide sequence ID" value="XM_063269975.1"/>
</dbReference>
<dbReference type="PDB" id="7QGG">
    <property type="method" value="EM"/>
    <property type="resolution" value="2.86 A"/>
    <property type="chains" value="SC=1-293"/>
</dbReference>
<dbReference type="PDBsum" id="7QGG"/>
<dbReference type="EMDB" id="EMD-13954"/>
<dbReference type="SMR" id="P27952"/>
<dbReference type="BioGRID" id="249832">
    <property type="interactions" value="4"/>
</dbReference>
<dbReference type="FunCoup" id="P27952">
    <property type="interactions" value="2489"/>
</dbReference>
<dbReference type="IntAct" id="P27952">
    <property type="interactions" value="6"/>
</dbReference>
<dbReference type="MINT" id="P27952"/>
<dbReference type="STRING" id="10116.ENSRNOP00000019508"/>
<dbReference type="iPTMnet" id="P27952"/>
<dbReference type="PhosphoSitePlus" id="P27952"/>
<dbReference type="jPOST" id="P27952"/>
<dbReference type="PaxDb" id="10116-ENSRNOP00000019508"/>
<dbReference type="Ensembl" id="ENSRNOT00000019508.7">
    <property type="protein sequence ID" value="ENSRNOP00000019508.3"/>
    <property type="gene ID" value="ENSRNOG00000014179.8"/>
</dbReference>
<dbReference type="GeneID" id="83789"/>
<dbReference type="KEGG" id="rno:83789"/>
<dbReference type="UCSC" id="RGD:619887">
    <property type="organism name" value="rat"/>
</dbReference>
<dbReference type="AGR" id="RGD:619887"/>
<dbReference type="CTD" id="6187"/>
<dbReference type="RGD" id="619887">
    <property type="gene designation" value="Rps2"/>
</dbReference>
<dbReference type="eggNOG" id="KOG0877">
    <property type="taxonomic scope" value="Eukaryota"/>
</dbReference>
<dbReference type="GeneTree" id="ENSGT00940000153095"/>
<dbReference type="HOGENOM" id="CLU_065898_0_2_1"/>
<dbReference type="InParanoid" id="P27952"/>
<dbReference type="OMA" id="PYEEWSD"/>
<dbReference type="OrthoDB" id="10253125at2759"/>
<dbReference type="PhylomeDB" id="P27952"/>
<dbReference type="Reactome" id="R-RNO-156827">
    <property type="pathway name" value="L13a-mediated translational silencing of Ceruloplasmin expression"/>
</dbReference>
<dbReference type="Reactome" id="R-RNO-1799339">
    <property type="pathway name" value="SRP-dependent cotranslational protein targeting to membrane"/>
</dbReference>
<dbReference type="Reactome" id="R-RNO-3214858">
    <property type="pathway name" value="RMTs methylate histone arginines"/>
</dbReference>
<dbReference type="Reactome" id="R-RNO-6791226">
    <property type="pathway name" value="Major pathway of rRNA processing in the nucleolus and cytosol"/>
</dbReference>
<dbReference type="Reactome" id="R-RNO-72649">
    <property type="pathway name" value="Translation initiation complex formation"/>
</dbReference>
<dbReference type="Reactome" id="R-RNO-72689">
    <property type="pathway name" value="Formation of a pool of free 40S subunits"/>
</dbReference>
<dbReference type="Reactome" id="R-RNO-72695">
    <property type="pathway name" value="Formation of the ternary complex, and subsequently, the 43S complex"/>
</dbReference>
<dbReference type="Reactome" id="R-RNO-72702">
    <property type="pathway name" value="Ribosomal scanning and start codon recognition"/>
</dbReference>
<dbReference type="Reactome" id="R-RNO-72706">
    <property type="pathway name" value="GTP hydrolysis and joining of the 60S ribosomal subunit"/>
</dbReference>
<dbReference type="Reactome" id="R-RNO-8876725">
    <property type="pathway name" value="Protein methylation"/>
</dbReference>
<dbReference type="Reactome" id="R-RNO-975956">
    <property type="pathway name" value="Nonsense Mediated Decay (NMD) independent of the Exon Junction Complex (EJC)"/>
</dbReference>
<dbReference type="Reactome" id="R-RNO-975957">
    <property type="pathway name" value="Nonsense Mediated Decay (NMD) enhanced by the Exon Junction Complex (EJC)"/>
</dbReference>
<dbReference type="PRO" id="PR:P27952"/>
<dbReference type="Proteomes" id="UP000002494">
    <property type="component" value="Chromosome 10"/>
</dbReference>
<dbReference type="Bgee" id="ENSRNOG00000014179">
    <property type="expression patterns" value="Expressed in spleen and 18 other cell types or tissues"/>
</dbReference>
<dbReference type="GO" id="GO:0022626">
    <property type="term" value="C:cytosolic ribosome"/>
    <property type="evidence" value="ECO:0000266"/>
    <property type="project" value="RGD"/>
</dbReference>
<dbReference type="GO" id="GO:0022627">
    <property type="term" value="C:cytosolic small ribosomal subunit"/>
    <property type="evidence" value="ECO:0000314"/>
    <property type="project" value="RGD"/>
</dbReference>
<dbReference type="GO" id="GO:0005654">
    <property type="term" value="C:nucleoplasm"/>
    <property type="evidence" value="ECO:0000266"/>
    <property type="project" value="RGD"/>
</dbReference>
<dbReference type="GO" id="GO:1990904">
    <property type="term" value="C:ribonucleoprotein complex"/>
    <property type="evidence" value="ECO:0000314"/>
    <property type="project" value="RGD"/>
</dbReference>
<dbReference type="GO" id="GO:0045202">
    <property type="term" value="C:synapse"/>
    <property type="evidence" value="ECO:0000266"/>
    <property type="project" value="RGD"/>
</dbReference>
<dbReference type="GO" id="GO:0019899">
    <property type="term" value="F:enzyme binding"/>
    <property type="evidence" value="ECO:0000266"/>
    <property type="project" value="RGD"/>
</dbReference>
<dbReference type="GO" id="GO:0017134">
    <property type="term" value="F:fibroblast growth factor binding"/>
    <property type="evidence" value="ECO:0000266"/>
    <property type="project" value="RGD"/>
</dbReference>
<dbReference type="GO" id="GO:0003729">
    <property type="term" value="F:mRNA binding"/>
    <property type="evidence" value="ECO:0000266"/>
    <property type="project" value="RGD"/>
</dbReference>
<dbReference type="GO" id="GO:0044877">
    <property type="term" value="F:protein-containing complex binding"/>
    <property type="evidence" value="ECO:0000315"/>
    <property type="project" value="RGD"/>
</dbReference>
<dbReference type="GO" id="GO:0003735">
    <property type="term" value="F:structural constituent of ribosome"/>
    <property type="evidence" value="ECO:0000315"/>
    <property type="project" value="RGD"/>
</dbReference>
<dbReference type="GO" id="GO:0071353">
    <property type="term" value="P:cellular response to interleukin-4"/>
    <property type="evidence" value="ECO:0000266"/>
    <property type="project" value="RGD"/>
</dbReference>
<dbReference type="GO" id="GO:0001731">
    <property type="term" value="P:formation of translation preinitiation complex"/>
    <property type="evidence" value="ECO:0000315"/>
    <property type="project" value="RGD"/>
</dbReference>
<dbReference type="GO" id="GO:0045471">
    <property type="term" value="P:response to ethanol"/>
    <property type="evidence" value="ECO:0000270"/>
    <property type="project" value="RGD"/>
</dbReference>
<dbReference type="GO" id="GO:0000028">
    <property type="term" value="P:ribosomal small subunit assembly"/>
    <property type="evidence" value="ECO:0000315"/>
    <property type="project" value="RGD"/>
</dbReference>
<dbReference type="GO" id="GO:0006412">
    <property type="term" value="P:translation"/>
    <property type="evidence" value="ECO:0000318"/>
    <property type="project" value="GO_Central"/>
</dbReference>
<dbReference type="FunFam" id="3.30.160.20:FF:000133">
    <property type="entry name" value="40S ribosomal protein S2"/>
    <property type="match status" value="1"/>
</dbReference>
<dbReference type="FunFam" id="3.30.230.10:FF:000004">
    <property type="entry name" value="40S ribosomal protein S2"/>
    <property type="match status" value="1"/>
</dbReference>
<dbReference type="Gene3D" id="3.30.160.20">
    <property type="match status" value="1"/>
</dbReference>
<dbReference type="Gene3D" id="3.30.230.10">
    <property type="match status" value="1"/>
</dbReference>
<dbReference type="InterPro" id="IPR020568">
    <property type="entry name" value="Ribosomal_Su5_D2-typ_SF"/>
</dbReference>
<dbReference type="InterPro" id="IPR000851">
    <property type="entry name" value="Ribosomal_uS5"/>
</dbReference>
<dbReference type="InterPro" id="IPR005324">
    <property type="entry name" value="Ribosomal_uS5_C"/>
</dbReference>
<dbReference type="InterPro" id="IPR005711">
    <property type="entry name" value="Ribosomal_uS5_euk/arc"/>
</dbReference>
<dbReference type="InterPro" id="IPR013810">
    <property type="entry name" value="Ribosomal_uS5_N"/>
</dbReference>
<dbReference type="InterPro" id="IPR018192">
    <property type="entry name" value="Ribosomal_uS5_N_CS"/>
</dbReference>
<dbReference type="InterPro" id="IPR014721">
    <property type="entry name" value="Ribsml_uS5_D2-typ_fold_subgr"/>
</dbReference>
<dbReference type="NCBIfam" id="TIGR01020">
    <property type="entry name" value="uS5_euk_arch"/>
    <property type="match status" value="1"/>
</dbReference>
<dbReference type="PANTHER" id="PTHR13718">
    <property type="entry name" value="RIBOSOMAL S SUBUNIT"/>
    <property type="match status" value="1"/>
</dbReference>
<dbReference type="PANTHER" id="PTHR13718:SF93">
    <property type="entry name" value="SMALL RIBOSOMAL SUBUNIT PROTEIN US5"/>
    <property type="match status" value="1"/>
</dbReference>
<dbReference type="Pfam" id="PF00333">
    <property type="entry name" value="Ribosomal_S5"/>
    <property type="match status" value="1"/>
</dbReference>
<dbReference type="Pfam" id="PF03719">
    <property type="entry name" value="Ribosomal_S5_C"/>
    <property type="match status" value="1"/>
</dbReference>
<dbReference type="SUPFAM" id="SSF54768">
    <property type="entry name" value="dsRNA-binding domain-like"/>
    <property type="match status" value="1"/>
</dbReference>
<dbReference type="SUPFAM" id="SSF54211">
    <property type="entry name" value="Ribosomal protein S5 domain 2-like"/>
    <property type="match status" value="1"/>
</dbReference>
<dbReference type="PROSITE" id="PS00585">
    <property type="entry name" value="RIBOSOMAL_S5"/>
    <property type="match status" value="1"/>
</dbReference>
<dbReference type="PROSITE" id="PS50881">
    <property type="entry name" value="S5_DSRBD"/>
    <property type="match status" value="1"/>
</dbReference>
<proteinExistence type="evidence at protein level"/>
<feature type="initiator methionine" description="Removed" evidence="1">
    <location>
        <position position="1"/>
    </location>
</feature>
<feature type="chain" id="PRO_0000131675" description="Small ribosomal subunit protein uS5">
    <location>
        <begin position="2"/>
        <end position="293"/>
    </location>
</feature>
<feature type="repeat" description="1-1">
    <location>
        <begin position="9"/>
        <end position="11"/>
    </location>
</feature>
<feature type="repeat" description="1-2">
    <location>
        <begin position="12"/>
        <end position="14"/>
    </location>
</feature>
<feature type="repeat" description="1-3">
    <location>
        <begin position="15"/>
        <end position="17"/>
    </location>
</feature>
<feature type="repeat" description="2-1">
    <location>
        <begin position="22"/>
        <end position="25"/>
    </location>
</feature>
<feature type="repeat" description="2-2">
    <location>
        <begin position="26"/>
        <end position="29"/>
    </location>
</feature>
<feature type="repeat" description="3-1">
    <location>
        <begin position="34"/>
        <end position="35"/>
    </location>
</feature>
<feature type="repeat" description="3-2">
    <location>
        <begin position="36"/>
        <end position="37"/>
    </location>
</feature>
<feature type="repeat" description="3-3">
    <location>
        <begin position="38"/>
        <end position="39"/>
    </location>
</feature>
<feature type="repeat" description="3-4">
    <location>
        <begin position="40"/>
        <end position="41"/>
    </location>
</feature>
<feature type="repeat" description="3-5">
    <location>
        <begin position="42"/>
        <end position="43"/>
    </location>
</feature>
<feature type="repeat" description="3-6">
    <location>
        <begin position="44"/>
        <end position="45"/>
    </location>
</feature>
<feature type="repeat" description="3-7">
    <location>
        <begin position="46"/>
        <end position="47"/>
    </location>
</feature>
<feature type="repeat" description="3-8">
    <location>
        <begin position="48"/>
        <end position="49"/>
    </location>
</feature>
<feature type="repeat" description="3-9">
    <location>
        <begin position="51"/>
        <end position="52"/>
    </location>
</feature>
<feature type="domain" description="S5 DRBM" evidence="3">
    <location>
        <begin position="102"/>
        <end position="165"/>
    </location>
</feature>
<feature type="region of interest" description="Disordered" evidence="4">
    <location>
        <begin position="1"/>
        <end position="55"/>
    </location>
</feature>
<feature type="region of interest" description="3 X 3 AA tandem repeats of G-G-P">
    <location>
        <begin position="9"/>
        <end position="17"/>
    </location>
</feature>
<feature type="region of interest" description="2 X 4 AA tandem repeats of R-G-G-F">
    <location>
        <begin position="22"/>
        <end position="29"/>
    </location>
</feature>
<feature type="region of interest" description="9 X 2 AA tandem repeats of R-G">
    <location>
        <begin position="34"/>
        <end position="52"/>
    </location>
</feature>
<feature type="compositionally biased region" description="Gly residues" evidence="4">
    <location>
        <begin position="7"/>
        <end position="34"/>
    </location>
</feature>
<feature type="compositionally biased region" description="Basic residues" evidence="4">
    <location>
        <begin position="35"/>
        <end position="51"/>
    </location>
</feature>
<feature type="modified residue" description="N-acetylalanine" evidence="1">
    <location>
        <position position="2"/>
    </location>
</feature>
<feature type="modified residue" description="Phosphothreonine" evidence="1">
    <location>
        <position position="252"/>
    </location>
</feature>
<feature type="modified residue" description="N6-acetyllysine" evidence="1">
    <location>
        <position position="263"/>
    </location>
</feature>
<feature type="modified residue" description="Phosphoserine" evidence="1">
    <location>
        <position position="264"/>
    </location>
</feature>
<feature type="modified residue" description="Phosphothreonine" evidence="1">
    <location>
        <position position="270"/>
    </location>
</feature>
<feature type="modified residue" description="N6-acetyllysine; alternate" evidence="1">
    <location>
        <position position="275"/>
    </location>
</feature>
<feature type="modified residue" description="Phosphoserine" evidence="1">
    <location>
        <position position="281"/>
    </location>
</feature>
<feature type="cross-link" description="Glycyl lysine isopeptide (Lys-Gly) (interchain with G-Cter in ubiquitin)" evidence="1">
    <location>
        <position position="54"/>
    </location>
</feature>
<feature type="cross-link" description="Glycyl lysine isopeptide (Lys-Gly) (interchain with G-Cter in ubiquitin)" evidence="1">
    <location>
        <position position="58"/>
    </location>
</feature>
<feature type="cross-link" description="Glycyl lysine isopeptide (Lys-Gly) (interchain with G-Cter in SUMO1); alternate" evidence="1">
    <location>
        <position position="275"/>
    </location>
</feature>
<feature type="cross-link" description="Glycyl lysine isopeptide (Lys-Gly) (interchain with G-Cter in SUMO2); alternate" evidence="1">
    <location>
        <position position="275"/>
    </location>
</feature>
<feature type="cross-link" description="Glycyl lysine isopeptide (Lys-Gly) (interchain with G-Cter in ubiquitin); alternate" evidence="1">
    <location>
        <position position="275"/>
    </location>
</feature>